<comment type="function">
    <text evidence="1">Transport of potassium into the cell. Likely operates as a K(+):H(+) symporter.</text>
</comment>
<comment type="catalytic activity">
    <reaction evidence="1">
        <text>K(+)(in) + H(+)(in) = K(+)(out) + H(+)(out)</text>
        <dbReference type="Rhea" id="RHEA:28490"/>
        <dbReference type="ChEBI" id="CHEBI:15378"/>
        <dbReference type="ChEBI" id="CHEBI:29103"/>
    </reaction>
    <physiologicalReaction direction="right-to-left" evidence="1">
        <dbReference type="Rhea" id="RHEA:28492"/>
    </physiologicalReaction>
</comment>
<comment type="subcellular location">
    <subcellularLocation>
        <location evidence="1">Cell inner membrane</location>
        <topology evidence="1">Multi-pass membrane protein</topology>
    </subcellularLocation>
</comment>
<comment type="similarity">
    <text evidence="1">Belongs to the HAK/KUP transporter (TC 2.A.72) family.</text>
</comment>
<proteinExistence type="inferred from homology"/>
<sequence length="622" mass="68268">MENARRLLVLALGSVGVVYGDIGTSPLYAFREALRPVSHDGVTDVEIIGLISLMIWALTIIVTIKYVLFLLRADNQGEGGTLSLLALLMKTANGHTAILFFMGIAGAALFIGDAMITPALSVLSAVEGLKLVTPALSDYVVPIAVVILLLLFTVQSKGTAAVSNFFGPITLIWFVVMGTIGFVHIADDLSIFRAFNPYYAASFLFNEGYVGIVVLGAVFLTVTGAEALYADLGHFGRRPIQWAWFTVVFPALTLNYLGQGAFVLKNPEAMSDPFFLMFPKWALLPAVILATAATIIASQAVITGAFSLTRQAIHLGFLPRMAIFHTSETHTGQIYLPNVNTLLMFGVMALVFLFGSSEALATAYGISVTGAMVVTTVLSFEFLRMRWNWPTWWAAGALLPLFVLEFVFLGANMLKIHDGGYVPILIAATFIVIMWTWKRGTAILHAKTRHIDIPLASFIKSVERQSEHAPVSVTGTAIFLTSDPESTPAALLHNIKHNHVLHQQNFILTIRTANTPKVPKEERVSVRRLSERFTLLEMKFGFMETQNVSQALGLFRKSGLKFDIMSTSFYLGRRKLVPDAQSGMPHWQDRLFIALANAAIDPSDYFRLPTNRVVELGSHVII</sequence>
<feature type="chain" id="PRO_0000209048" description="Probable potassium transport system protein Kup 1">
    <location>
        <begin position="1"/>
        <end position="622"/>
    </location>
</feature>
<feature type="transmembrane region" description="Helical" evidence="1">
    <location>
        <begin position="7"/>
        <end position="27"/>
    </location>
</feature>
<feature type="transmembrane region" description="Helical" evidence="1">
    <location>
        <begin position="50"/>
        <end position="70"/>
    </location>
</feature>
<feature type="transmembrane region" description="Helical" evidence="1">
    <location>
        <begin position="96"/>
        <end position="116"/>
    </location>
</feature>
<feature type="transmembrane region" description="Helical" evidence="1">
    <location>
        <begin position="132"/>
        <end position="152"/>
    </location>
</feature>
<feature type="transmembrane region" description="Helical" evidence="1">
    <location>
        <begin position="165"/>
        <end position="185"/>
    </location>
</feature>
<feature type="transmembrane region" description="Helical" evidence="1">
    <location>
        <begin position="210"/>
        <end position="230"/>
    </location>
</feature>
<feature type="transmembrane region" description="Helical" evidence="1">
    <location>
        <begin position="244"/>
        <end position="264"/>
    </location>
</feature>
<feature type="transmembrane region" description="Helical" evidence="1">
    <location>
        <begin position="282"/>
        <end position="302"/>
    </location>
</feature>
<feature type="transmembrane region" description="Helical" evidence="1">
    <location>
        <begin position="334"/>
        <end position="354"/>
    </location>
</feature>
<feature type="transmembrane region" description="Helical" evidence="1">
    <location>
        <begin position="360"/>
        <end position="380"/>
    </location>
</feature>
<feature type="transmembrane region" description="Helical" evidence="1">
    <location>
        <begin position="391"/>
        <end position="411"/>
    </location>
</feature>
<feature type="transmembrane region" description="Helical" evidence="1">
    <location>
        <begin position="416"/>
        <end position="436"/>
    </location>
</feature>
<accession>Q92RN0</accession>
<dbReference type="EMBL" id="AL591688">
    <property type="protein sequence ID" value="CAC45404.1"/>
    <property type="molecule type" value="Genomic_DNA"/>
</dbReference>
<dbReference type="RefSeq" id="NP_384938.1">
    <property type="nucleotide sequence ID" value="NC_003047.1"/>
</dbReference>
<dbReference type="EnsemblBacteria" id="CAC45404">
    <property type="protein sequence ID" value="CAC45404"/>
    <property type="gene ID" value="SMc00873"/>
</dbReference>
<dbReference type="KEGG" id="sme:SMc00873"/>
<dbReference type="PATRIC" id="fig|266834.11.peg.2223"/>
<dbReference type="eggNOG" id="COG3158">
    <property type="taxonomic scope" value="Bacteria"/>
</dbReference>
<dbReference type="HOGENOM" id="CLU_008142_4_2_5"/>
<dbReference type="OrthoDB" id="9805577at2"/>
<dbReference type="Proteomes" id="UP000001976">
    <property type="component" value="Chromosome"/>
</dbReference>
<dbReference type="GO" id="GO:0005886">
    <property type="term" value="C:plasma membrane"/>
    <property type="evidence" value="ECO:0007669"/>
    <property type="project" value="UniProtKB-SubCell"/>
</dbReference>
<dbReference type="GO" id="GO:0015079">
    <property type="term" value="F:potassium ion transmembrane transporter activity"/>
    <property type="evidence" value="ECO:0007669"/>
    <property type="project" value="UniProtKB-UniRule"/>
</dbReference>
<dbReference type="GO" id="GO:0015293">
    <property type="term" value="F:symporter activity"/>
    <property type="evidence" value="ECO:0007669"/>
    <property type="project" value="UniProtKB-UniRule"/>
</dbReference>
<dbReference type="HAMAP" id="MF_01522">
    <property type="entry name" value="Kup"/>
    <property type="match status" value="1"/>
</dbReference>
<dbReference type="InterPro" id="IPR003855">
    <property type="entry name" value="K+_transporter"/>
</dbReference>
<dbReference type="InterPro" id="IPR053952">
    <property type="entry name" value="K_trans_C"/>
</dbReference>
<dbReference type="InterPro" id="IPR053951">
    <property type="entry name" value="K_trans_N"/>
</dbReference>
<dbReference type="InterPro" id="IPR023051">
    <property type="entry name" value="Kup"/>
</dbReference>
<dbReference type="PANTHER" id="PTHR30540:SF79">
    <property type="entry name" value="LOW AFFINITY POTASSIUM TRANSPORT SYSTEM PROTEIN KUP"/>
    <property type="match status" value="1"/>
</dbReference>
<dbReference type="PANTHER" id="PTHR30540">
    <property type="entry name" value="OSMOTIC STRESS POTASSIUM TRANSPORTER"/>
    <property type="match status" value="1"/>
</dbReference>
<dbReference type="Pfam" id="PF02705">
    <property type="entry name" value="K_trans"/>
    <property type="match status" value="1"/>
</dbReference>
<dbReference type="Pfam" id="PF22776">
    <property type="entry name" value="K_trans_C"/>
    <property type="match status" value="1"/>
</dbReference>
<reference key="1">
    <citation type="journal article" date="2001" name="Proc. Natl. Acad. Sci. U.S.A.">
        <title>Analysis of the chromosome sequence of the legume symbiont Sinorhizobium meliloti strain 1021.</title>
        <authorList>
            <person name="Capela D."/>
            <person name="Barloy-Hubler F."/>
            <person name="Gouzy J."/>
            <person name="Bothe G."/>
            <person name="Ampe F."/>
            <person name="Batut J."/>
            <person name="Boistard P."/>
            <person name="Becker A."/>
            <person name="Boutry M."/>
            <person name="Cadieu E."/>
            <person name="Dreano S."/>
            <person name="Gloux S."/>
            <person name="Godrie T."/>
            <person name="Goffeau A."/>
            <person name="Kahn D."/>
            <person name="Kiss E."/>
            <person name="Lelaure V."/>
            <person name="Masuy D."/>
            <person name="Pohl T."/>
            <person name="Portetelle D."/>
            <person name="Puehler A."/>
            <person name="Purnelle B."/>
            <person name="Ramsperger U."/>
            <person name="Renard C."/>
            <person name="Thebault P."/>
            <person name="Vandenbol M."/>
            <person name="Weidner S."/>
            <person name="Galibert F."/>
        </authorList>
    </citation>
    <scope>NUCLEOTIDE SEQUENCE [LARGE SCALE GENOMIC DNA]</scope>
    <source>
        <strain>1021</strain>
    </source>
</reference>
<reference key="2">
    <citation type="journal article" date="2001" name="Science">
        <title>The composite genome of the legume symbiont Sinorhizobium meliloti.</title>
        <authorList>
            <person name="Galibert F."/>
            <person name="Finan T.M."/>
            <person name="Long S.R."/>
            <person name="Puehler A."/>
            <person name="Abola P."/>
            <person name="Ampe F."/>
            <person name="Barloy-Hubler F."/>
            <person name="Barnett M.J."/>
            <person name="Becker A."/>
            <person name="Boistard P."/>
            <person name="Bothe G."/>
            <person name="Boutry M."/>
            <person name="Bowser L."/>
            <person name="Buhrmester J."/>
            <person name="Cadieu E."/>
            <person name="Capela D."/>
            <person name="Chain P."/>
            <person name="Cowie A."/>
            <person name="Davis R.W."/>
            <person name="Dreano S."/>
            <person name="Federspiel N.A."/>
            <person name="Fisher R.F."/>
            <person name="Gloux S."/>
            <person name="Godrie T."/>
            <person name="Goffeau A."/>
            <person name="Golding B."/>
            <person name="Gouzy J."/>
            <person name="Gurjal M."/>
            <person name="Hernandez-Lucas I."/>
            <person name="Hong A."/>
            <person name="Huizar L."/>
            <person name="Hyman R.W."/>
            <person name="Jones T."/>
            <person name="Kahn D."/>
            <person name="Kahn M.L."/>
            <person name="Kalman S."/>
            <person name="Keating D.H."/>
            <person name="Kiss E."/>
            <person name="Komp C."/>
            <person name="Lelaure V."/>
            <person name="Masuy D."/>
            <person name="Palm C."/>
            <person name="Peck M.C."/>
            <person name="Pohl T.M."/>
            <person name="Portetelle D."/>
            <person name="Purnelle B."/>
            <person name="Ramsperger U."/>
            <person name="Surzycki R."/>
            <person name="Thebault P."/>
            <person name="Vandenbol M."/>
            <person name="Vorhoelter F.J."/>
            <person name="Weidner S."/>
            <person name="Wells D.H."/>
            <person name="Wong K."/>
            <person name="Yeh K.-C."/>
            <person name="Batut J."/>
        </authorList>
    </citation>
    <scope>NUCLEOTIDE SEQUENCE [LARGE SCALE GENOMIC DNA]</scope>
    <source>
        <strain>1021</strain>
    </source>
</reference>
<keyword id="KW-0997">Cell inner membrane</keyword>
<keyword id="KW-1003">Cell membrane</keyword>
<keyword id="KW-0406">Ion transport</keyword>
<keyword id="KW-0472">Membrane</keyword>
<keyword id="KW-0630">Potassium</keyword>
<keyword id="KW-0633">Potassium transport</keyword>
<keyword id="KW-1185">Reference proteome</keyword>
<keyword id="KW-0769">Symport</keyword>
<keyword id="KW-0812">Transmembrane</keyword>
<keyword id="KW-1133">Transmembrane helix</keyword>
<keyword id="KW-0813">Transport</keyword>
<gene>
    <name evidence="1" type="primary">kup1</name>
    <name type="ordered locus">R00832</name>
    <name type="ORF">SMc00873</name>
</gene>
<protein>
    <recommendedName>
        <fullName evidence="1">Probable potassium transport system protein Kup 1</fullName>
    </recommendedName>
</protein>
<organism>
    <name type="scientific">Rhizobium meliloti (strain 1021)</name>
    <name type="common">Ensifer meliloti</name>
    <name type="synonym">Sinorhizobium meliloti</name>
    <dbReference type="NCBI Taxonomy" id="266834"/>
    <lineage>
        <taxon>Bacteria</taxon>
        <taxon>Pseudomonadati</taxon>
        <taxon>Pseudomonadota</taxon>
        <taxon>Alphaproteobacteria</taxon>
        <taxon>Hyphomicrobiales</taxon>
        <taxon>Rhizobiaceae</taxon>
        <taxon>Sinorhizobium/Ensifer group</taxon>
        <taxon>Sinorhizobium</taxon>
    </lineage>
</organism>
<name>KUP1_RHIME</name>
<evidence type="ECO:0000255" key="1">
    <source>
        <dbReference type="HAMAP-Rule" id="MF_01522"/>
    </source>
</evidence>